<comment type="function">
    <text evidence="1">Catalyzes the condensation of iminoaspartate with dihydroxyacetone phosphate to form quinolinate.</text>
</comment>
<comment type="catalytic activity">
    <reaction evidence="1">
        <text>iminosuccinate + dihydroxyacetone phosphate = quinolinate + phosphate + 2 H2O + H(+)</text>
        <dbReference type="Rhea" id="RHEA:25888"/>
        <dbReference type="ChEBI" id="CHEBI:15377"/>
        <dbReference type="ChEBI" id="CHEBI:15378"/>
        <dbReference type="ChEBI" id="CHEBI:29959"/>
        <dbReference type="ChEBI" id="CHEBI:43474"/>
        <dbReference type="ChEBI" id="CHEBI:57642"/>
        <dbReference type="ChEBI" id="CHEBI:77875"/>
        <dbReference type="EC" id="2.5.1.72"/>
    </reaction>
    <physiologicalReaction direction="left-to-right" evidence="1">
        <dbReference type="Rhea" id="RHEA:25889"/>
    </physiologicalReaction>
</comment>
<comment type="cofactor">
    <cofactor evidence="1">
        <name>[4Fe-4S] cluster</name>
        <dbReference type="ChEBI" id="CHEBI:49883"/>
    </cofactor>
    <text evidence="1">Binds 1 [4Fe-4S] cluster per subunit.</text>
</comment>
<comment type="pathway">
    <text evidence="1">Cofactor biosynthesis; NAD(+) biosynthesis; quinolinate from iminoaspartate: step 1/1.</text>
</comment>
<comment type="subcellular location">
    <subcellularLocation>
        <location evidence="1">Cytoplasm</location>
    </subcellularLocation>
</comment>
<comment type="similarity">
    <text evidence="1">Belongs to the quinolinate synthase family. Type 1 subfamily.</text>
</comment>
<protein>
    <recommendedName>
        <fullName evidence="1">Quinolinate synthase</fullName>
        <ecNumber evidence="1">2.5.1.72</ecNumber>
    </recommendedName>
</protein>
<organism>
    <name type="scientific">Erwinia tasmaniensis (strain DSM 17950 / CFBP 7177 / CIP 109463 / NCPPB 4357 / Et1/99)</name>
    <dbReference type="NCBI Taxonomy" id="465817"/>
    <lineage>
        <taxon>Bacteria</taxon>
        <taxon>Pseudomonadati</taxon>
        <taxon>Pseudomonadota</taxon>
        <taxon>Gammaproteobacteria</taxon>
        <taxon>Enterobacterales</taxon>
        <taxon>Erwiniaceae</taxon>
        <taxon>Erwinia</taxon>
    </lineage>
</organism>
<dbReference type="EC" id="2.5.1.72" evidence="1"/>
<dbReference type="EMBL" id="CU468135">
    <property type="protein sequence ID" value="CAO97334.1"/>
    <property type="molecule type" value="Genomic_DNA"/>
</dbReference>
<dbReference type="RefSeq" id="WP_012442003.1">
    <property type="nucleotide sequence ID" value="NC_010694.1"/>
</dbReference>
<dbReference type="SMR" id="B2VBT3"/>
<dbReference type="STRING" id="465817.ETA_22880"/>
<dbReference type="KEGG" id="eta:ETA_22880"/>
<dbReference type="eggNOG" id="COG0379">
    <property type="taxonomic scope" value="Bacteria"/>
</dbReference>
<dbReference type="HOGENOM" id="CLU_047382_1_0_6"/>
<dbReference type="OrthoDB" id="9801204at2"/>
<dbReference type="UniPathway" id="UPA00253">
    <property type="reaction ID" value="UER00327"/>
</dbReference>
<dbReference type="Proteomes" id="UP000001726">
    <property type="component" value="Chromosome"/>
</dbReference>
<dbReference type="GO" id="GO:0005829">
    <property type="term" value="C:cytosol"/>
    <property type="evidence" value="ECO:0007669"/>
    <property type="project" value="TreeGrafter"/>
</dbReference>
<dbReference type="GO" id="GO:0051539">
    <property type="term" value="F:4 iron, 4 sulfur cluster binding"/>
    <property type="evidence" value="ECO:0007669"/>
    <property type="project" value="UniProtKB-KW"/>
</dbReference>
<dbReference type="GO" id="GO:0046872">
    <property type="term" value="F:metal ion binding"/>
    <property type="evidence" value="ECO:0007669"/>
    <property type="project" value="UniProtKB-KW"/>
</dbReference>
<dbReference type="GO" id="GO:0008987">
    <property type="term" value="F:quinolinate synthetase A activity"/>
    <property type="evidence" value="ECO:0007669"/>
    <property type="project" value="UniProtKB-UniRule"/>
</dbReference>
<dbReference type="GO" id="GO:0034628">
    <property type="term" value="P:'de novo' NAD biosynthetic process from L-aspartate"/>
    <property type="evidence" value="ECO:0007669"/>
    <property type="project" value="TreeGrafter"/>
</dbReference>
<dbReference type="FunFam" id="3.40.50.10800:FF:000003">
    <property type="entry name" value="Quinolinate synthase A"/>
    <property type="match status" value="1"/>
</dbReference>
<dbReference type="Gene3D" id="3.40.50.10800">
    <property type="entry name" value="NadA-like"/>
    <property type="match status" value="3"/>
</dbReference>
<dbReference type="HAMAP" id="MF_00567">
    <property type="entry name" value="NadA_type1"/>
    <property type="match status" value="1"/>
</dbReference>
<dbReference type="InterPro" id="IPR003473">
    <property type="entry name" value="NadA"/>
</dbReference>
<dbReference type="InterPro" id="IPR036094">
    <property type="entry name" value="NadA_sf"/>
</dbReference>
<dbReference type="InterPro" id="IPR023513">
    <property type="entry name" value="Quinolinate_synth_A_type1"/>
</dbReference>
<dbReference type="NCBIfam" id="TIGR00550">
    <property type="entry name" value="nadA"/>
    <property type="match status" value="1"/>
</dbReference>
<dbReference type="NCBIfam" id="NF006877">
    <property type="entry name" value="PRK09375.1-1"/>
    <property type="match status" value="1"/>
</dbReference>
<dbReference type="NCBIfam" id="NF006878">
    <property type="entry name" value="PRK09375.1-2"/>
    <property type="match status" value="1"/>
</dbReference>
<dbReference type="PANTHER" id="PTHR30573:SF0">
    <property type="entry name" value="QUINOLINATE SYNTHASE, CHLOROPLASTIC"/>
    <property type="match status" value="1"/>
</dbReference>
<dbReference type="PANTHER" id="PTHR30573">
    <property type="entry name" value="QUINOLINATE SYNTHETASE A"/>
    <property type="match status" value="1"/>
</dbReference>
<dbReference type="Pfam" id="PF02445">
    <property type="entry name" value="NadA"/>
    <property type="match status" value="1"/>
</dbReference>
<dbReference type="SUPFAM" id="SSF142754">
    <property type="entry name" value="NadA-like"/>
    <property type="match status" value="1"/>
</dbReference>
<keyword id="KW-0004">4Fe-4S</keyword>
<keyword id="KW-0963">Cytoplasm</keyword>
<keyword id="KW-0408">Iron</keyword>
<keyword id="KW-0411">Iron-sulfur</keyword>
<keyword id="KW-0479">Metal-binding</keyword>
<keyword id="KW-0662">Pyridine nucleotide biosynthesis</keyword>
<keyword id="KW-1185">Reference proteome</keyword>
<keyword id="KW-0808">Transferase</keyword>
<gene>
    <name evidence="1" type="primary">nadA</name>
    <name type="ordered locus">ETA_22880</name>
</gene>
<accession>B2VBT3</accession>
<feature type="chain" id="PRO_1000129417" description="Quinolinate synthase">
    <location>
        <begin position="1"/>
        <end position="353"/>
    </location>
</feature>
<feature type="binding site" evidence="1">
    <location>
        <position position="47"/>
    </location>
    <ligand>
        <name>iminosuccinate</name>
        <dbReference type="ChEBI" id="CHEBI:77875"/>
    </ligand>
</feature>
<feature type="binding site" evidence="1">
    <location>
        <position position="68"/>
    </location>
    <ligand>
        <name>iminosuccinate</name>
        <dbReference type="ChEBI" id="CHEBI:77875"/>
    </ligand>
</feature>
<feature type="binding site" evidence="1">
    <location>
        <position position="113"/>
    </location>
    <ligand>
        <name>[4Fe-4S] cluster</name>
        <dbReference type="ChEBI" id="CHEBI:49883"/>
    </ligand>
</feature>
<feature type="binding site" evidence="1">
    <location>
        <begin position="139"/>
        <end position="141"/>
    </location>
    <ligand>
        <name>iminosuccinate</name>
        <dbReference type="ChEBI" id="CHEBI:77875"/>
    </ligand>
</feature>
<feature type="binding site" evidence="1">
    <location>
        <position position="156"/>
    </location>
    <ligand>
        <name>iminosuccinate</name>
        <dbReference type="ChEBI" id="CHEBI:77875"/>
    </ligand>
</feature>
<feature type="binding site" evidence="1">
    <location>
        <position position="200"/>
    </location>
    <ligand>
        <name>[4Fe-4S] cluster</name>
        <dbReference type="ChEBI" id="CHEBI:49883"/>
    </ligand>
</feature>
<feature type="binding site" evidence="1">
    <location>
        <begin position="226"/>
        <end position="228"/>
    </location>
    <ligand>
        <name>iminosuccinate</name>
        <dbReference type="ChEBI" id="CHEBI:77875"/>
    </ligand>
</feature>
<feature type="binding site" evidence="1">
    <location>
        <position position="243"/>
    </location>
    <ligand>
        <name>iminosuccinate</name>
        <dbReference type="ChEBI" id="CHEBI:77875"/>
    </ligand>
</feature>
<feature type="binding site" evidence="1">
    <location>
        <position position="297"/>
    </location>
    <ligand>
        <name>[4Fe-4S] cluster</name>
        <dbReference type="ChEBI" id="CHEBI:49883"/>
    </ligand>
</feature>
<evidence type="ECO:0000255" key="1">
    <source>
        <dbReference type="HAMAP-Rule" id="MF_00567"/>
    </source>
</evidence>
<name>NADA_ERWT9</name>
<reference key="1">
    <citation type="journal article" date="2008" name="Environ. Microbiol.">
        <title>The genome of Erwinia tasmaniensis strain Et1/99, a non-pathogenic bacterium in the genus Erwinia.</title>
        <authorList>
            <person name="Kube M."/>
            <person name="Migdoll A.M."/>
            <person name="Mueller I."/>
            <person name="Kuhl H."/>
            <person name="Beck A."/>
            <person name="Reinhardt R."/>
            <person name="Geider K."/>
        </authorList>
    </citation>
    <scope>NUCLEOTIDE SEQUENCE [LARGE SCALE GENOMIC DNA]</scope>
    <source>
        <strain>DSM 17950 / CFBP 7177 / CIP 109463 / NCPPB 4357 / Et1/99</strain>
    </source>
</reference>
<proteinExistence type="inferred from homology"/>
<sequence length="353" mass="38737">MSLMFDVDAAVYPFPAKPIRLSSDEKLAYRTKIKRLLQERDAVMVAHYYTDPDIQALAEETGGCVADSLEMARFGSQHSAATLLVAGVRFMGETAKILSPEKTILMPTLQAECSLDLGCPIDEFSRFCDAHPDRTVVVYANTSAAVKARADWVVTSSIAVELIEHLDSLGEKIIWAPDRHLGQYVQRQTSADILCWQSACIVHDEFKTQALQRMKLLYPEAAVLVHPESPQAIVDLADAVGSTSQLIQAAQTLPHRQMIVATDRGIFYKMQQACPDKELLEAPTAGEGATCRSCAHCPWMAMNGLKAIADGLEQGGSEHEILINDALREGALIPLNRMLTFAKDLKLKVRGNA</sequence>